<keyword id="KW-0963">Cytoplasm</keyword>
<keyword id="KW-0444">Lipid biosynthesis</keyword>
<keyword id="KW-0443">Lipid metabolism</keyword>
<keyword id="KW-0594">Phospholipid biosynthesis</keyword>
<keyword id="KW-1208">Phospholipid metabolism</keyword>
<keyword id="KW-1185">Reference proteome</keyword>
<keyword id="KW-0808">Transferase</keyword>
<name>PLSX_PARL1</name>
<gene>
    <name evidence="1" type="primary">plsX</name>
    <name type="ordered locus">Plav_2922</name>
</gene>
<reference key="1">
    <citation type="journal article" date="2011" name="Stand. Genomic Sci.">
        <title>Complete genome sequence of Parvibaculum lavamentivorans type strain (DS-1(T)).</title>
        <authorList>
            <person name="Schleheck D."/>
            <person name="Weiss M."/>
            <person name="Pitluck S."/>
            <person name="Bruce D."/>
            <person name="Land M.L."/>
            <person name="Han S."/>
            <person name="Saunders E."/>
            <person name="Tapia R."/>
            <person name="Detter C."/>
            <person name="Brettin T."/>
            <person name="Han J."/>
            <person name="Woyke T."/>
            <person name="Goodwin L."/>
            <person name="Pennacchio L."/>
            <person name="Nolan M."/>
            <person name="Cook A.M."/>
            <person name="Kjelleberg S."/>
            <person name="Thomas T."/>
        </authorList>
    </citation>
    <scope>NUCLEOTIDE SEQUENCE [LARGE SCALE GENOMIC DNA]</scope>
    <source>
        <strain>DS-1 / DSM 13023 / NCIMB 13966</strain>
    </source>
</reference>
<dbReference type="EC" id="2.3.1.274" evidence="1"/>
<dbReference type="EMBL" id="CP000774">
    <property type="protein sequence ID" value="ABS64529.1"/>
    <property type="molecule type" value="Genomic_DNA"/>
</dbReference>
<dbReference type="RefSeq" id="WP_012111845.1">
    <property type="nucleotide sequence ID" value="NC_009719.1"/>
</dbReference>
<dbReference type="SMR" id="A7HX96"/>
<dbReference type="STRING" id="402881.Plav_2922"/>
<dbReference type="KEGG" id="pla:Plav_2922"/>
<dbReference type="eggNOG" id="COG0416">
    <property type="taxonomic scope" value="Bacteria"/>
</dbReference>
<dbReference type="HOGENOM" id="CLU_039379_1_0_5"/>
<dbReference type="OrthoDB" id="9806408at2"/>
<dbReference type="UniPathway" id="UPA00085"/>
<dbReference type="Proteomes" id="UP000006377">
    <property type="component" value="Chromosome"/>
</dbReference>
<dbReference type="GO" id="GO:0005737">
    <property type="term" value="C:cytoplasm"/>
    <property type="evidence" value="ECO:0007669"/>
    <property type="project" value="UniProtKB-SubCell"/>
</dbReference>
<dbReference type="GO" id="GO:0043811">
    <property type="term" value="F:phosphate:acyl-[acyl carrier protein] acyltransferase activity"/>
    <property type="evidence" value="ECO:0007669"/>
    <property type="project" value="UniProtKB-UniRule"/>
</dbReference>
<dbReference type="GO" id="GO:0006633">
    <property type="term" value="P:fatty acid biosynthetic process"/>
    <property type="evidence" value="ECO:0007669"/>
    <property type="project" value="UniProtKB-UniRule"/>
</dbReference>
<dbReference type="GO" id="GO:0008654">
    <property type="term" value="P:phospholipid biosynthetic process"/>
    <property type="evidence" value="ECO:0007669"/>
    <property type="project" value="UniProtKB-KW"/>
</dbReference>
<dbReference type="Gene3D" id="3.40.718.10">
    <property type="entry name" value="Isopropylmalate Dehydrogenase"/>
    <property type="match status" value="1"/>
</dbReference>
<dbReference type="HAMAP" id="MF_00019">
    <property type="entry name" value="PlsX"/>
    <property type="match status" value="1"/>
</dbReference>
<dbReference type="InterPro" id="IPR003664">
    <property type="entry name" value="FA_synthesis"/>
</dbReference>
<dbReference type="InterPro" id="IPR012281">
    <property type="entry name" value="Phospholipid_synth_PlsX-like"/>
</dbReference>
<dbReference type="NCBIfam" id="TIGR00182">
    <property type="entry name" value="plsX"/>
    <property type="match status" value="1"/>
</dbReference>
<dbReference type="PANTHER" id="PTHR30100">
    <property type="entry name" value="FATTY ACID/PHOSPHOLIPID SYNTHESIS PROTEIN PLSX"/>
    <property type="match status" value="1"/>
</dbReference>
<dbReference type="PANTHER" id="PTHR30100:SF1">
    <property type="entry name" value="PHOSPHATE ACYLTRANSFERASE"/>
    <property type="match status" value="1"/>
</dbReference>
<dbReference type="Pfam" id="PF02504">
    <property type="entry name" value="FA_synthesis"/>
    <property type="match status" value="1"/>
</dbReference>
<dbReference type="PIRSF" id="PIRSF002465">
    <property type="entry name" value="Phsphlp_syn_PlsX"/>
    <property type="match status" value="1"/>
</dbReference>
<dbReference type="SUPFAM" id="SSF53659">
    <property type="entry name" value="Isocitrate/Isopropylmalate dehydrogenase-like"/>
    <property type="match status" value="1"/>
</dbReference>
<evidence type="ECO:0000255" key="1">
    <source>
        <dbReference type="HAMAP-Rule" id="MF_00019"/>
    </source>
</evidence>
<organism>
    <name type="scientific">Parvibaculum lavamentivorans (strain DS-1 / DSM 13023 / NCIMB 13966)</name>
    <dbReference type="NCBI Taxonomy" id="402881"/>
    <lineage>
        <taxon>Bacteria</taxon>
        <taxon>Pseudomonadati</taxon>
        <taxon>Pseudomonadota</taxon>
        <taxon>Alphaproteobacteria</taxon>
        <taxon>Hyphomicrobiales</taxon>
        <taxon>Parvibaculaceae</taxon>
        <taxon>Parvibaculum</taxon>
    </lineage>
</organism>
<accession>A7HX96</accession>
<proteinExistence type="inferred from homology"/>
<sequence>MTRGLTIALDGMGGDHGPETVIGGADIASVRHPDIRFLIYGDETKIRPFLEKHPRVLSVSEIIHTDVSVSMEDKPSQALRRGRKTSSMWLAIDAVKAGEAQAAVSAGNTGALMAMAKVILRMMPNVERPALAALWPTARGESVMLDLGATVGADGYQLVQFAAMGEAFARVVFNIEQPTVGLLNIGEEEVKGTEGVKLAAQMLREADLPIRFHGFVEGDDIAKGTVDVVVTDGYTGNIALKTAEGMVRLVVDYLRAAMRSSLLSRLGYLLAYGAFRALAKKLDPRASNGAVFLGLNGLVVKSHGGTDAIGFAAAIDVAVDVASADLLSKIVTDLDRLSGLTTSMAGRKQNSDIAESEAVLS</sequence>
<feature type="chain" id="PRO_1000070991" description="Phosphate acyltransferase">
    <location>
        <begin position="1"/>
        <end position="361"/>
    </location>
</feature>
<comment type="function">
    <text evidence="1">Catalyzes the reversible formation of acyl-phosphate (acyl-PO(4)) from acyl-[acyl-carrier-protein] (acyl-ACP). This enzyme utilizes acyl-ACP as fatty acyl donor, but not acyl-CoA.</text>
</comment>
<comment type="catalytic activity">
    <reaction evidence="1">
        <text>a fatty acyl-[ACP] + phosphate = an acyl phosphate + holo-[ACP]</text>
        <dbReference type="Rhea" id="RHEA:42292"/>
        <dbReference type="Rhea" id="RHEA-COMP:9685"/>
        <dbReference type="Rhea" id="RHEA-COMP:14125"/>
        <dbReference type="ChEBI" id="CHEBI:43474"/>
        <dbReference type="ChEBI" id="CHEBI:59918"/>
        <dbReference type="ChEBI" id="CHEBI:64479"/>
        <dbReference type="ChEBI" id="CHEBI:138651"/>
        <dbReference type="EC" id="2.3.1.274"/>
    </reaction>
</comment>
<comment type="pathway">
    <text evidence="1">Lipid metabolism; phospholipid metabolism.</text>
</comment>
<comment type="subunit">
    <text evidence="1">Homodimer. Probably interacts with PlsY.</text>
</comment>
<comment type="subcellular location">
    <subcellularLocation>
        <location evidence="1">Cytoplasm</location>
    </subcellularLocation>
    <text evidence="1">Associated with the membrane possibly through PlsY.</text>
</comment>
<comment type="similarity">
    <text evidence="1">Belongs to the PlsX family.</text>
</comment>
<protein>
    <recommendedName>
        <fullName evidence="1">Phosphate acyltransferase</fullName>
        <ecNumber evidence="1">2.3.1.274</ecNumber>
    </recommendedName>
    <alternativeName>
        <fullName evidence="1">Acyl-ACP phosphotransacylase</fullName>
    </alternativeName>
    <alternativeName>
        <fullName evidence="1">Acyl-[acyl-carrier-protein]--phosphate acyltransferase</fullName>
    </alternativeName>
    <alternativeName>
        <fullName evidence="1">Phosphate-acyl-ACP acyltransferase</fullName>
    </alternativeName>
</protein>